<gene>
    <name evidence="1" type="primary">apaH</name>
    <name type="ordered locus">EcSMS35_0053</name>
</gene>
<sequence length="282" mass="31501">MATYLIGDVHGCYDELIALLHKVEFTPGKDTLWLTGDLVARGPGSLDVLRYVKSLGDSVRLVLGNHDLHLLAVFAGISRNKPKDRLTPLLEAPDADELLNWLRRQPLLQIDEEKKLVMAHAGITPQWDLQTAKECARDVEAVLSSDSYPFFLDAMYGDMPNNWSPELRGLGRLRFITNAFTRMRFCFPNGQLDMYSKESPEEAPAPLKPWFAIPGPVAEEYSIAFGHWASLEGKGTPEGIYALDTGCCWGGTLTCLRWEDKQYFVQPSNRHKDMGEGEAAAS</sequence>
<reference key="1">
    <citation type="journal article" date="2008" name="J. Bacteriol.">
        <title>Insights into the environmental resistance gene pool from the genome sequence of the multidrug-resistant environmental isolate Escherichia coli SMS-3-5.</title>
        <authorList>
            <person name="Fricke W.F."/>
            <person name="Wright M.S."/>
            <person name="Lindell A.H."/>
            <person name="Harkins D.M."/>
            <person name="Baker-Austin C."/>
            <person name="Ravel J."/>
            <person name="Stepanauskas R."/>
        </authorList>
    </citation>
    <scope>NUCLEOTIDE SEQUENCE [LARGE SCALE GENOMIC DNA]</scope>
    <source>
        <strain>SMS-3-5 / SECEC</strain>
    </source>
</reference>
<protein>
    <recommendedName>
        <fullName evidence="1">Bis(5'-nucleosyl)-tetraphosphatase, symmetrical</fullName>
        <ecNumber evidence="1">3.6.1.41</ecNumber>
    </recommendedName>
    <alternativeName>
        <fullName evidence="1">Ap4A hydrolase</fullName>
    </alternativeName>
    <alternativeName>
        <fullName evidence="1">Diadenosine 5',5'''-P1,P4-tetraphosphate pyrophosphohydrolase</fullName>
    </alternativeName>
    <alternativeName>
        <fullName evidence="1">Diadenosine tetraphosphatase</fullName>
    </alternativeName>
</protein>
<organism>
    <name type="scientific">Escherichia coli (strain SMS-3-5 / SECEC)</name>
    <dbReference type="NCBI Taxonomy" id="439855"/>
    <lineage>
        <taxon>Bacteria</taxon>
        <taxon>Pseudomonadati</taxon>
        <taxon>Pseudomonadota</taxon>
        <taxon>Gammaproteobacteria</taxon>
        <taxon>Enterobacterales</taxon>
        <taxon>Enterobacteriaceae</taxon>
        <taxon>Escherichia</taxon>
    </lineage>
</organism>
<feature type="chain" id="PRO_1000118696" description="Bis(5'-nucleosyl)-tetraphosphatase, symmetrical">
    <location>
        <begin position="1"/>
        <end position="282"/>
    </location>
</feature>
<proteinExistence type="inferred from homology"/>
<keyword id="KW-0378">Hydrolase</keyword>
<evidence type="ECO:0000255" key="1">
    <source>
        <dbReference type="HAMAP-Rule" id="MF_00199"/>
    </source>
</evidence>
<comment type="function">
    <text evidence="1">Hydrolyzes diadenosine 5',5'''-P1,P4-tetraphosphate to yield ADP.</text>
</comment>
<comment type="catalytic activity">
    <reaction evidence="1">
        <text>P(1),P(4)-bis(5'-adenosyl) tetraphosphate + H2O = 2 ADP + 2 H(+)</text>
        <dbReference type="Rhea" id="RHEA:24252"/>
        <dbReference type="ChEBI" id="CHEBI:15377"/>
        <dbReference type="ChEBI" id="CHEBI:15378"/>
        <dbReference type="ChEBI" id="CHEBI:58141"/>
        <dbReference type="ChEBI" id="CHEBI:456216"/>
        <dbReference type="EC" id="3.6.1.41"/>
    </reaction>
</comment>
<comment type="similarity">
    <text evidence="1">Belongs to the Ap4A hydrolase family.</text>
</comment>
<name>APAH_ECOSM</name>
<dbReference type="EC" id="3.6.1.41" evidence="1"/>
<dbReference type="EMBL" id="CP000970">
    <property type="protein sequence ID" value="ACB17030.1"/>
    <property type="molecule type" value="Genomic_DNA"/>
</dbReference>
<dbReference type="RefSeq" id="WP_000257195.1">
    <property type="nucleotide sequence ID" value="NC_010498.1"/>
</dbReference>
<dbReference type="SMR" id="B1LFY5"/>
<dbReference type="KEGG" id="ecm:EcSMS35_0053"/>
<dbReference type="HOGENOM" id="CLU_056184_2_0_6"/>
<dbReference type="Proteomes" id="UP000007011">
    <property type="component" value="Chromosome"/>
</dbReference>
<dbReference type="GO" id="GO:0008803">
    <property type="term" value="F:bis(5'-nucleosyl)-tetraphosphatase (symmetrical) activity"/>
    <property type="evidence" value="ECO:0007669"/>
    <property type="project" value="UniProtKB-UniRule"/>
</dbReference>
<dbReference type="CDD" id="cd07422">
    <property type="entry name" value="MPP_ApaH"/>
    <property type="match status" value="1"/>
</dbReference>
<dbReference type="FunFam" id="3.60.21.10:FF:000013">
    <property type="entry name" value="Bis(5'-nucleosyl)-tetraphosphatase, symmetrical"/>
    <property type="match status" value="1"/>
</dbReference>
<dbReference type="Gene3D" id="3.60.21.10">
    <property type="match status" value="1"/>
</dbReference>
<dbReference type="HAMAP" id="MF_00199">
    <property type="entry name" value="ApaH"/>
    <property type="match status" value="1"/>
</dbReference>
<dbReference type="InterPro" id="IPR004617">
    <property type="entry name" value="ApaH"/>
</dbReference>
<dbReference type="InterPro" id="IPR004843">
    <property type="entry name" value="Calcineurin-like_PHP_ApaH"/>
</dbReference>
<dbReference type="InterPro" id="IPR029052">
    <property type="entry name" value="Metallo-depent_PP-like"/>
</dbReference>
<dbReference type="NCBIfam" id="TIGR00668">
    <property type="entry name" value="apaH"/>
    <property type="match status" value="1"/>
</dbReference>
<dbReference type="NCBIfam" id="NF001204">
    <property type="entry name" value="PRK00166.1"/>
    <property type="match status" value="1"/>
</dbReference>
<dbReference type="PANTHER" id="PTHR40942">
    <property type="match status" value="1"/>
</dbReference>
<dbReference type="PANTHER" id="PTHR40942:SF4">
    <property type="entry name" value="CYTOCHROME C5"/>
    <property type="match status" value="1"/>
</dbReference>
<dbReference type="Pfam" id="PF00149">
    <property type="entry name" value="Metallophos"/>
    <property type="match status" value="1"/>
</dbReference>
<dbReference type="PIRSF" id="PIRSF000903">
    <property type="entry name" value="B5n-ttraPtase_sm"/>
    <property type="match status" value="1"/>
</dbReference>
<dbReference type="SUPFAM" id="SSF56300">
    <property type="entry name" value="Metallo-dependent phosphatases"/>
    <property type="match status" value="1"/>
</dbReference>
<accession>B1LFY5</accession>